<protein>
    <recommendedName>
        <fullName evidence="1">Orotate phosphoribosyltransferase</fullName>
        <shortName evidence="1">OPRT</shortName>
        <shortName evidence="1">OPRTase</shortName>
        <ecNumber evidence="1">2.4.2.10</ecNumber>
    </recommendedName>
</protein>
<evidence type="ECO:0000255" key="1">
    <source>
        <dbReference type="HAMAP-Rule" id="MF_01208"/>
    </source>
</evidence>
<reference key="1">
    <citation type="journal article" date="1998" name="DNA Res.">
        <title>Complete sequence and gene organization of the genome of a hyper-thermophilic archaebacterium, Pyrococcus horikoshii OT3.</title>
        <authorList>
            <person name="Kawarabayasi Y."/>
            <person name="Sawada M."/>
            <person name="Horikawa H."/>
            <person name="Haikawa Y."/>
            <person name="Hino Y."/>
            <person name="Yamamoto S."/>
            <person name="Sekine M."/>
            <person name="Baba S."/>
            <person name="Kosugi H."/>
            <person name="Hosoyama A."/>
            <person name="Nagai Y."/>
            <person name="Sakai M."/>
            <person name="Ogura K."/>
            <person name="Otsuka R."/>
            <person name="Nakazawa H."/>
            <person name="Takamiya M."/>
            <person name="Ohfuku Y."/>
            <person name="Funahashi T."/>
            <person name="Tanaka T."/>
            <person name="Kudoh Y."/>
            <person name="Yamazaki J."/>
            <person name="Kushida N."/>
            <person name="Oguchi A."/>
            <person name="Aoki K."/>
            <person name="Yoshizawa T."/>
            <person name="Nakamura Y."/>
            <person name="Robb F.T."/>
            <person name="Horikoshi K."/>
            <person name="Masuchi Y."/>
            <person name="Shizuya H."/>
            <person name="Kikuchi H."/>
        </authorList>
    </citation>
    <scope>NUCLEOTIDE SEQUENCE [LARGE SCALE GENOMIC DNA]</scope>
    <source>
        <strain>ATCC 700860 / DSM 12428 / JCM 9974 / NBRC 100139 / OT-3</strain>
    </source>
</reference>
<organism>
    <name type="scientific">Pyrococcus horikoshii (strain ATCC 700860 / DSM 12428 / JCM 9974 / NBRC 100139 / OT-3)</name>
    <dbReference type="NCBI Taxonomy" id="70601"/>
    <lineage>
        <taxon>Archaea</taxon>
        <taxon>Methanobacteriati</taxon>
        <taxon>Methanobacteriota</taxon>
        <taxon>Thermococci</taxon>
        <taxon>Thermococcales</taxon>
        <taxon>Thermococcaceae</taxon>
        <taxon>Pyrococcus</taxon>
    </lineage>
</organism>
<accession>O58855</accession>
<comment type="function">
    <text evidence="1">Catalyzes the transfer of a ribosyl phosphate group from 5-phosphoribose 1-diphosphate to orotate, leading to the formation of orotidine monophosphate (OMP).</text>
</comment>
<comment type="catalytic activity">
    <reaction evidence="1">
        <text>orotidine 5'-phosphate + diphosphate = orotate + 5-phospho-alpha-D-ribose 1-diphosphate</text>
        <dbReference type="Rhea" id="RHEA:10380"/>
        <dbReference type="ChEBI" id="CHEBI:30839"/>
        <dbReference type="ChEBI" id="CHEBI:33019"/>
        <dbReference type="ChEBI" id="CHEBI:57538"/>
        <dbReference type="ChEBI" id="CHEBI:58017"/>
        <dbReference type="EC" id="2.4.2.10"/>
    </reaction>
</comment>
<comment type="cofactor">
    <cofactor evidence="1">
        <name>Mg(2+)</name>
        <dbReference type="ChEBI" id="CHEBI:18420"/>
    </cofactor>
</comment>
<comment type="pathway">
    <text evidence="1">Pyrimidine metabolism; UMP biosynthesis via de novo pathway; UMP from orotate: step 1/2.</text>
</comment>
<comment type="subunit">
    <text evidence="1">Homodimer.</text>
</comment>
<comment type="similarity">
    <text evidence="1">Belongs to the purine/pyrimidine phosphoribosyltransferase family. PyrE subfamily.</text>
</comment>
<name>PYRE_PYRHO</name>
<gene>
    <name evidence="1" type="primary">pyrE</name>
    <name type="ordered locus">PH1128</name>
    <name type="ORF">PHBP017</name>
</gene>
<keyword id="KW-0328">Glycosyltransferase</keyword>
<keyword id="KW-0460">Magnesium</keyword>
<keyword id="KW-0665">Pyrimidine biosynthesis</keyword>
<keyword id="KW-0808">Transferase</keyword>
<sequence length="186" mass="20430">MKMKDELINLIINEGCIKFGHFVLTSGKESNYYIDIKSLITNPKALRIIAKLIKEKAEELNLNYDKIAGPELGAVPIATALSLETNKPLLIVRKKKKEHGTGKVIEGNVQKGDKVLLVEDVTTTGGSVIRAAKILREHGADVVGIFVVVDREEGAKENIEKEGFKFYPLVLVSELFKAAGISKDQS</sequence>
<feature type="chain" id="PRO_0000110787" description="Orotate phosphoribosyltransferase">
    <location>
        <begin position="1"/>
        <end position="186"/>
    </location>
</feature>
<feature type="binding site" evidence="1">
    <location>
        <position position="93"/>
    </location>
    <ligand>
        <name>5-phospho-alpha-D-ribose 1-diphosphate</name>
        <dbReference type="ChEBI" id="CHEBI:58017"/>
        <note>ligand shared between dimeric partners</note>
    </ligand>
</feature>
<feature type="binding site" description="in other chain" evidence="1">
    <location>
        <position position="94"/>
    </location>
    <ligand>
        <name>5-phospho-alpha-D-ribose 1-diphosphate</name>
        <dbReference type="ChEBI" id="CHEBI:58017"/>
        <note>ligand shared between dimeric partners</note>
    </ligand>
</feature>
<feature type="binding site" evidence="1">
    <location>
        <position position="97"/>
    </location>
    <ligand>
        <name>5-phospho-alpha-D-ribose 1-diphosphate</name>
        <dbReference type="ChEBI" id="CHEBI:58017"/>
        <note>ligand shared between dimeric partners</note>
    </ligand>
</feature>
<feature type="binding site" evidence="1">
    <location>
        <position position="99"/>
    </location>
    <ligand>
        <name>5-phospho-alpha-D-ribose 1-diphosphate</name>
        <dbReference type="ChEBI" id="CHEBI:58017"/>
        <note>ligand shared between dimeric partners</note>
    </ligand>
</feature>
<feature type="binding site" description="in other chain" evidence="1">
    <location>
        <begin position="119"/>
        <end position="127"/>
    </location>
    <ligand>
        <name>5-phospho-alpha-D-ribose 1-diphosphate</name>
        <dbReference type="ChEBI" id="CHEBI:58017"/>
        <note>ligand shared between dimeric partners</note>
    </ligand>
</feature>
<feature type="binding site" evidence="1">
    <location>
        <position position="123"/>
    </location>
    <ligand>
        <name>orotate</name>
        <dbReference type="ChEBI" id="CHEBI:30839"/>
    </ligand>
</feature>
<feature type="binding site" evidence="1">
    <location>
        <position position="151"/>
    </location>
    <ligand>
        <name>orotate</name>
        <dbReference type="ChEBI" id="CHEBI:30839"/>
    </ligand>
</feature>
<dbReference type="EC" id="2.4.2.10" evidence="1"/>
<dbReference type="EMBL" id="BA000001">
    <property type="protein sequence ID" value="BAA30228.1"/>
    <property type="molecule type" value="Genomic_DNA"/>
</dbReference>
<dbReference type="PIR" id="B71054">
    <property type="entry name" value="B71054"/>
</dbReference>
<dbReference type="SMR" id="O58855"/>
<dbReference type="STRING" id="70601.gene:9378088"/>
<dbReference type="EnsemblBacteria" id="BAA30228">
    <property type="protein sequence ID" value="BAA30228"/>
    <property type="gene ID" value="BAA30228"/>
</dbReference>
<dbReference type="KEGG" id="pho:PH1128"/>
<dbReference type="eggNOG" id="arCOG00029">
    <property type="taxonomic scope" value="Archaea"/>
</dbReference>
<dbReference type="UniPathway" id="UPA00070">
    <property type="reaction ID" value="UER00119"/>
</dbReference>
<dbReference type="Proteomes" id="UP000000752">
    <property type="component" value="Chromosome"/>
</dbReference>
<dbReference type="GO" id="GO:0000287">
    <property type="term" value="F:magnesium ion binding"/>
    <property type="evidence" value="ECO:0007669"/>
    <property type="project" value="UniProtKB-UniRule"/>
</dbReference>
<dbReference type="GO" id="GO:0004588">
    <property type="term" value="F:orotate phosphoribosyltransferase activity"/>
    <property type="evidence" value="ECO:0007669"/>
    <property type="project" value="UniProtKB-UniRule"/>
</dbReference>
<dbReference type="GO" id="GO:0044205">
    <property type="term" value="P:'de novo' UMP biosynthetic process"/>
    <property type="evidence" value="ECO:0007669"/>
    <property type="project" value="UniProtKB-UniRule"/>
</dbReference>
<dbReference type="GO" id="GO:0019856">
    <property type="term" value="P:pyrimidine nucleobase biosynthetic process"/>
    <property type="evidence" value="ECO:0007669"/>
    <property type="project" value="TreeGrafter"/>
</dbReference>
<dbReference type="CDD" id="cd06223">
    <property type="entry name" value="PRTases_typeI"/>
    <property type="match status" value="1"/>
</dbReference>
<dbReference type="FunFam" id="3.40.50.2020:FF:000029">
    <property type="entry name" value="Orotate phosphoribosyltransferase"/>
    <property type="match status" value="1"/>
</dbReference>
<dbReference type="Gene3D" id="3.40.50.2020">
    <property type="match status" value="1"/>
</dbReference>
<dbReference type="HAMAP" id="MF_01208">
    <property type="entry name" value="PyrE"/>
    <property type="match status" value="1"/>
</dbReference>
<dbReference type="InterPro" id="IPR023031">
    <property type="entry name" value="OPRT"/>
</dbReference>
<dbReference type="InterPro" id="IPR004467">
    <property type="entry name" value="Or_phspho_trans_dom"/>
</dbReference>
<dbReference type="InterPro" id="IPR000836">
    <property type="entry name" value="PRibTrfase_dom"/>
</dbReference>
<dbReference type="InterPro" id="IPR029057">
    <property type="entry name" value="PRTase-like"/>
</dbReference>
<dbReference type="NCBIfam" id="TIGR00336">
    <property type="entry name" value="pyrE"/>
    <property type="match status" value="1"/>
</dbReference>
<dbReference type="PANTHER" id="PTHR19278">
    <property type="entry name" value="OROTATE PHOSPHORIBOSYLTRANSFERASE"/>
    <property type="match status" value="1"/>
</dbReference>
<dbReference type="PANTHER" id="PTHR19278:SF9">
    <property type="entry name" value="URIDINE 5'-MONOPHOSPHATE SYNTHASE"/>
    <property type="match status" value="1"/>
</dbReference>
<dbReference type="Pfam" id="PF00156">
    <property type="entry name" value="Pribosyltran"/>
    <property type="match status" value="1"/>
</dbReference>
<dbReference type="SUPFAM" id="SSF53271">
    <property type="entry name" value="PRTase-like"/>
    <property type="match status" value="1"/>
</dbReference>
<proteinExistence type="inferred from homology"/>